<reference key="1">
    <citation type="journal article" date="2002" name="Proc. Natl. Acad. Sci. U.S.A.">
        <title>The Brucella suis genome reveals fundamental similarities between animal and plant pathogens and symbionts.</title>
        <authorList>
            <person name="Paulsen I.T."/>
            <person name="Seshadri R."/>
            <person name="Nelson K.E."/>
            <person name="Eisen J.A."/>
            <person name="Heidelberg J.F."/>
            <person name="Read T.D."/>
            <person name="Dodson R.J."/>
            <person name="Umayam L.A."/>
            <person name="Brinkac L.M."/>
            <person name="Beanan M.J."/>
            <person name="Daugherty S.C."/>
            <person name="DeBoy R.T."/>
            <person name="Durkin A.S."/>
            <person name="Kolonay J.F."/>
            <person name="Madupu R."/>
            <person name="Nelson W.C."/>
            <person name="Ayodeji B."/>
            <person name="Kraul M."/>
            <person name="Shetty J."/>
            <person name="Malek J.A."/>
            <person name="Van Aken S.E."/>
            <person name="Riedmuller S."/>
            <person name="Tettelin H."/>
            <person name="Gill S.R."/>
            <person name="White O."/>
            <person name="Salzberg S.L."/>
            <person name="Hoover D.L."/>
            <person name="Lindler L.E."/>
            <person name="Halling S.M."/>
            <person name="Boyle S.M."/>
            <person name="Fraser C.M."/>
        </authorList>
    </citation>
    <scope>NUCLEOTIDE SEQUENCE [LARGE SCALE GENOMIC DNA]</scope>
    <source>
        <strain>1330</strain>
    </source>
</reference>
<reference key="2">
    <citation type="journal article" date="2011" name="J. Bacteriol.">
        <title>Revised genome sequence of Brucella suis 1330.</title>
        <authorList>
            <person name="Tae H."/>
            <person name="Shallom S."/>
            <person name="Settlage R."/>
            <person name="Preston D."/>
            <person name="Adams L.G."/>
            <person name="Garner H.R."/>
        </authorList>
    </citation>
    <scope>NUCLEOTIDE SEQUENCE [LARGE SCALE GENOMIC DNA]</scope>
    <source>
        <strain>1330</strain>
    </source>
</reference>
<reference key="3">
    <citation type="journal article" date="2007" name="BMC Microbiol.">
        <title>Brucella suis urease encoded by ure1 but not ure2 is necessary for intestinal infection of BALB/c mice.</title>
        <authorList>
            <person name="Bandara A.B."/>
            <person name="Contreras A."/>
            <person name="Contreras-Rodriguez A."/>
            <person name="Martins A.M."/>
            <person name="Dobrean V."/>
            <person name="Poff-Reichow S."/>
            <person name="Rajasekaran P."/>
            <person name="Sriranganathan N."/>
            <person name="Schurig G.G."/>
            <person name="Boyle S.M."/>
        </authorList>
    </citation>
    <scope>CHARACTERIZATION OF ROLE IN VIRULENCE</scope>
    <scope>OPERON DISRUPTION</scope>
    <source>
        <strain>1330</strain>
    </source>
</reference>
<proteinExistence type="evidence at protein level"/>
<comment type="function">
    <text>Disrupting the ure1 operon causes loss of urease activity, decreased resistance to low pH killing in vitro and decreased pathogen survival when inoculated in BALB/c mice by gavage.</text>
</comment>
<comment type="catalytic activity">
    <reaction evidence="1">
        <text>urea + 2 H2O + H(+) = hydrogencarbonate + 2 NH4(+)</text>
        <dbReference type="Rhea" id="RHEA:20557"/>
        <dbReference type="ChEBI" id="CHEBI:15377"/>
        <dbReference type="ChEBI" id="CHEBI:15378"/>
        <dbReference type="ChEBI" id="CHEBI:16199"/>
        <dbReference type="ChEBI" id="CHEBI:17544"/>
        <dbReference type="ChEBI" id="CHEBI:28938"/>
        <dbReference type="EC" id="3.5.1.5"/>
    </reaction>
</comment>
<comment type="cofactor">
    <cofactor evidence="1">
        <name>Ni cation</name>
        <dbReference type="ChEBI" id="CHEBI:25516"/>
    </cofactor>
    <text evidence="1">Binds 2 nickel ions per subunit.</text>
</comment>
<comment type="pathway">
    <text evidence="1">Nitrogen metabolism; urea degradation; CO(2) and NH(3) from urea (urease route): step 1/1.</text>
</comment>
<comment type="subunit">
    <text evidence="1">Heterotrimer of UreA (gamma), UreB (beta) and UreC (alpha) subunits. Three heterotrimers associate to form the active enzyme.</text>
</comment>
<comment type="subcellular location">
    <subcellularLocation>
        <location evidence="1">Cytoplasm</location>
    </subcellularLocation>
</comment>
<comment type="PTM">
    <text evidence="1">Carboxylation allows a single lysine to coordinate two nickel ions.</text>
</comment>
<comment type="similarity">
    <text evidence="1">Belongs to the metallo-dependent hydrolases superfamily. Urease alpha subunit family.</text>
</comment>
<name>URE11_BRUSU</name>
<protein>
    <recommendedName>
        <fullName evidence="1">Urease subunit alpha 1</fullName>
        <ecNumber evidence="1">3.5.1.5</ecNumber>
    </recommendedName>
    <alternativeName>
        <fullName evidence="1">Urea amidohydrolase subunit alpha 1</fullName>
    </alternativeName>
</protein>
<evidence type="ECO:0000255" key="1">
    <source>
        <dbReference type="HAMAP-Rule" id="MF_01953"/>
    </source>
</evidence>
<keyword id="KW-0963">Cytoplasm</keyword>
<keyword id="KW-0378">Hydrolase</keyword>
<keyword id="KW-0479">Metal-binding</keyword>
<keyword id="KW-0533">Nickel</keyword>
<keyword id="KW-0843">Virulence</keyword>
<organism>
    <name type="scientific">Brucella suis biovar 1 (strain 1330)</name>
    <dbReference type="NCBI Taxonomy" id="204722"/>
    <lineage>
        <taxon>Bacteria</taxon>
        <taxon>Pseudomonadati</taxon>
        <taxon>Pseudomonadota</taxon>
        <taxon>Alphaproteobacteria</taxon>
        <taxon>Hyphomicrobiales</taxon>
        <taxon>Brucellaceae</taxon>
        <taxon>Brucella/Ochrobactrum group</taxon>
        <taxon>Brucella</taxon>
    </lineage>
</organism>
<gene>
    <name evidence="1" type="primary">ureC1</name>
    <name type="ordered locus">BR0270</name>
    <name type="ordered locus">BS1330_I0271</name>
</gene>
<accession>Q8G2P8</accession>
<accession>G0KBW9</accession>
<sequence>MPARISRATYAQMFGPTVGDKVRLADTDLIIEVERDLTTYGEEVKFGGGKVIRDGMGQSQLSRAEGAMDTVITNALILDHSGIYKADIGLLDGRIALIGKAGNPDTQPGISIIIGPGTEIIAGEGKIVTAGGIDTHVHFISPQQVDEALNAGITCMVGGGTGPAHGTLATTCTPGPWHIARLIQSFDGLPMNIGVFGKGNASLPGALEEMVRAGACGLKLHEDWGCTPAAIDNCLSVADHFDVQVAIHTDTLNEGGFVEDTLNAFKGRTIHSFHTEGAGGGHAPDIIRVCQYPNVLPASTNPTRPYTVNTIAEHLDMLMVCHHLSPAIPEDIAFAESRIRKETIAAEDILHDMGAFSIISSDSQAMGRVGEMIIRCWQTADKMKKQRGSLPDDRPGNDNYRARRYIAKYTINPAIAHGMAHEIGSVEVGKRADLVLWNPAFFGVKPDMVLLGGWIATAPMGDANGSIPTPQPMHTRPMFGSFGKARTNTSITFVSQAAMDEGLREKIGVDKQLVAVVNTRGGIGKHSMILNNAMPQMEVDPETYEVRADGELLTCEPVDVVPMAQRYFLF</sequence>
<feature type="chain" id="PRO_0000234145" description="Urease subunit alpha 1">
    <location>
        <begin position="1"/>
        <end position="570"/>
    </location>
</feature>
<feature type="domain" description="Urease" evidence="1">
    <location>
        <begin position="131"/>
        <end position="570"/>
    </location>
</feature>
<feature type="active site" description="Proton donor" evidence="1">
    <location>
        <position position="322"/>
    </location>
</feature>
<feature type="binding site" evidence="1">
    <location>
        <position position="136"/>
    </location>
    <ligand>
        <name>Ni(2+)</name>
        <dbReference type="ChEBI" id="CHEBI:49786"/>
        <label>1</label>
    </ligand>
</feature>
<feature type="binding site" evidence="1">
    <location>
        <position position="138"/>
    </location>
    <ligand>
        <name>Ni(2+)</name>
        <dbReference type="ChEBI" id="CHEBI:49786"/>
        <label>1</label>
    </ligand>
</feature>
<feature type="binding site" description="via carbamate group" evidence="1">
    <location>
        <position position="219"/>
    </location>
    <ligand>
        <name>Ni(2+)</name>
        <dbReference type="ChEBI" id="CHEBI:49786"/>
        <label>1</label>
    </ligand>
</feature>
<feature type="binding site" description="via carbamate group" evidence="1">
    <location>
        <position position="219"/>
    </location>
    <ligand>
        <name>Ni(2+)</name>
        <dbReference type="ChEBI" id="CHEBI:49786"/>
        <label>2</label>
    </ligand>
</feature>
<feature type="binding site" evidence="1">
    <location>
        <position position="221"/>
    </location>
    <ligand>
        <name>substrate</name>
    </ligand>
</feature>
<feature type="binding site" evidence="1">
    <location>
        <position position="248"/>
    </location>
    <ligand>
        <name>Ni(2+)</name>
        <dbReference type="ChEBI" id="CHEBI:49786"/>
        <label>2</label>
    </ligand>
</feature>
<feature type="binding site" evidence="1">
    <location>
        <position position="274"/>
    </location>
    <ligand>
        <name>Ni(2+)</name>
        <dbReference type="ChEBI" id="CHEBI:49786"/>
        <label>2</label>
    </ligand>
</feature>
<feature type="binding site" evidence="1">
    <location>
        <position position="362"/>
    </location>
    <ligand>
        <name>Ni(2+)</name>
        <dbReference type="ChEBI" id="CHEBI:49786"/>
        <label>1</label>
    </ligand>
</feature>
<feature type="modified residue" description="N6-carboxylysine" evidence="1">
    <location>
        <position position="219"/>
    </location>
</feature>
<dbReference type="EC" id="3.5.1.5" evidence="1"/>
<dbReference type="EMBL" id="AE014291">
    <property type="protein sequence ID" value="AAN29219.1"/>
    <property type="molecule type" value="Genomic_DNA"/>
</dbReference>
<dbReference type="EMBL" id="CP002997">
    <property type="protein sequence ID" value="AEM17632.1"/>
    <property type="molecule type" value="Genomic_DNA"/>
</dbReference>
<dbReference type="SMR" id="Q8G2P8"/>
<dbReference type="MEROPS" id="M38.982"/>
<dbReference type="KEGG" id="bms:BR0270"/>
<dbReference type="KEGG" id="bsi:BS1330_I0271"/>
<dbReference type="PATRIC" id="fig|204722.21.peg.1753"/>
<dbReference type="HOGENOM" id="CLU_000980_0_0_5"/>
<dbReference type="PhylomeDB" id="Q8G2P8"/>
<dbReference type="UniPathway" id="UPA00258">
    <property type="reaction ID" value="UER00370"/>
</dbReference>
<dbReference type="Proteomes" id="UP000007104">
    <property type="component" value="Chromosome I"/>
</dbReference>
<dbReference type="GO" id="GO:0005737">
    <property type="term" value="C:cytoplasm"/>
    <property type="evidence" value="ECO:0007669"/>
    <property type="project" value="UniProtKB-SubCell"/>
</dbReference>
<dbReference type="GO" id="GO:0016151">
    <property type="term" value="F:nickel cation binding"/>
    <property type="evidence" value="ECO:0007669"/>
    <property type="project" value="UniProtKB-UniRule"/>
</dbReference>
<dbReference type="GO" id="GO:0009039">
    <property type="term" value="F:urease activity"/>
    <property type="evidence" value="ECO:0007669"/>
    <property type="project" value="UniProtKB-UniRule"/>
</dbReference>
<dbReference type="GO" id="GO:0043419">
    <property type="term" value="P:urea catabolic process"/>
    <property type="evidence" value="ECO:0007669"/>
    <property type="project" value="UniProtKB-UniRule"/>
</dbReference>
<dbReference type="CDD" id="cd00375">
    <property type="entry name" value="Urease_alpha"/>
    <property type="match status" value="1"/>
</dbReference>
<dbReference type="Gene3D" id="3.20.20.140">
    <property type="entry name" value="Metal-dependent hydrolases"/>
    <property type="match status" value="1"/>
</dbReference>
<dbReference type="Gene3D" id="2.30.40.10">
    <property type="entry name" value="Urease, subunit C, domain 1"/>
    <property type="match status" value="1"/>
</dbReference>
<dbReference type="HAMAP" id="MF_01953">
    <property type="entry name" value="Urease_alpha"/>
    <property type="match status" value="1"/>
</dbReference>
<dbReference type="InterPro" id="IPR006680">
    <property type="entry name" value="Amidohydro-rel"/>
</dbReference>
<dbReference type="InterPro" id="IPR011059">
    <property type="entry name" value="Metal-dep_hydrolase_composite"/>
</dbReference>
<dbReference type="InterPro" id="IPR032466">
    <property type="entry name" value="Metal_Hydrolase"/>
</dbReference>
<dbReference type="InterPro" id="IPR011612">
    <property type="entry name" value="Urease_alpha_N_dom"/>
</dbReference>
<dbReference type="InterPro" id="IPR050112">
    <property type="entry name" value="Urease_alpha_subunit"/>
</dbReference>
<dbReference type="InterPro" id="IPR017950">
    <property type="entry name" value="Urease_AS"/>
</dbReference>
<dbReference type="InterPro" id="IPR005848">
    <property type="entry name" value="Urease_asu"/>
</dbReference>
<dbReference type="InterPro" id="IPR017951">
    <property type="entry name" value="Urease_asu_c"/>
</dbReference>
<dbReference type="InterPro" id="IPR029754">
    <property type="entry name" value="Urease_Ni-bd"/>
</dbReference>
<dbReference type="NCBIfam" id="NF009685">
    <property type="entry name" value="PRK13206.1"/>
    <property type="match status" value="1"/>
</dbReference>
<dbReference type="NCBIfam" id="NF009686">
    <property type="entry name" value="PRK13207.1"/>
    <property type="match status" value="1"/>
</dbReference>
<dbReference type="NCBIfam" id="TIGR01792">
    <property type="entry name" value="urease_alph"/>
    <property type="match status" value="1"/>
</dbReference>
<dbReference type="PANTHER" id="PTHR43440">
    <property type="entry name" value="UREASE"/>
    <property type="match status" value="1"/>
</dbReference>
<dbReference type="PANTHER" id="PTHR43440:SF1">
    <property type="entry name" value="UREASE"/>
    <property type="match status" value="1"/>
</dbReference>
<dbReference type="Pfam" id="PF01979">
    <property type="entry name" value="Amidohydro_1"/>
    <property type="match status" value="1"/>
</dbReference>
<dbReference type="Pfam" id="PF00449">
    <property type="entry name" value="Urease_alpha"/>
    <property type="match status" value="1"/>
</dbReference>
<dbReference type="PRINTS" id="PR01752">
    <property type="entry name" value="UREASE"/>
</dbReference>
<dbReference type="SUPFAM" id="SSF51338">
    <property type="entry name" value="Composite domain of metallo-dependent hydrolases"/>
    <property type="match status" value="2"/>
</dbReference>
<dbReference type="SUPFAM" id="SSF51556">
    <property type="entry name" value="Metallo-dependent hydrolases"/>
    <property type="match status" value="1"/>
</dbReference>
<dbReference type="PROSITE" id="PS01120">
    <property type="entry name" value="UREASE_1"/>
    <property type="match status" value="1"/>
</dbReference>
<dbReference type="PROSITE" id="PS00145">
    <property type="entry name" value="UREASE_2"/>
    <property type="match status" value="1"/>
</dbReference>
<dbReference type="PROSITE" id="PS51368">
    <property type="entry name" value="UREASE_3"/>
    <property type="match status" value="1"/>
</dbReference>